<gene>
    <name type="primary">PNO1</name>
    <name type="ordered locus">YALI0E01122g</name>
</gene>
<accession>Q6C7G0</accession>
<name>PNO1_YARLI</name>
<sequence>MGAPTAKRQTQATEPTTDAPVAIPQTEGAEEDEVMISMDGPREDIAVLQEKDDDAEMTLDQDGKPRFASAVNAGEGVKPGRMKVPIPPHRMAPLKNEWMKIYPPLVEQLKLQVRMNPRKKQLELRTCSNTVDNSALQKGTDFVRAFTLGFDVDDAMAIIRLDELYVETFEIKDVKTLQGDHLGRAIGRIAGKDGKTKFAIENASRTRVVLADSKIHILGGFTNIKIAREAIVSLILGSPPGKVYGNLRIVASRMKERF</sequence>
<dbReference type="EMBL" id="CR382131">
    <property type="protein sequence ID" value="CAG78981.1"/>
    <property type="molecule type" value="Genomic_DNA"/>
</dbReference>
<dbReference type="RefSeq" id="XP_503402.1">
    <property type="nucleotide sequence ID" value="XM_503402.1"/>
</dbReference>
<dbReference type="SMR" id="Q6C7G0"/>
<dbReference type="FunCoup" id="Q6C7G0">
    <property type="interactions" value="968"/>
</dbReference>
<dbReference type="STRING" id="284591.Q6C7G0"/>
<dbReference type="EnsemblFungi" id="CAG78981">
    <property type="protein sequence ID" value="CAG78981"/>
    <property type="gene ID" value="YALI0_E01122g"/>
</dbReference>
<dbReference type="KEGG" id="yli:2912939"/>
<dbReference type="VEuPathDB" id="FungiDB:YALI0_E01122g"/>
<dbReference type="HOGENOM" id="CLU_064992_0_2_1"/>
<dbReference type="InParanoid" id="Q6C7G0"/>
<dbReference type="OMA" id="TPLRNNW"/>
<dbReference type="OrthoDB" id="105301at4891"/>
<dbReference type="Proteomes" id="UP000001300">
    <property type="component" value="Chromosome E"/>
</dbReference>
<dbReference type="GO" id="GO:0005737">
    <property type="term" value="C:cytoplasm"/>
    <property type="evidence" value="ECO:0007669"/>
    <property type="project" value="UniProtKB-SubCell"/>
</dbReference>
<dbReference type="GO" id="GO:0005730">
    <property type="term" value="C:nucleolus"/>
    <property type="evidence" value="ECO:0007669"/>
    <property type="project" value="UniProtKB-SubCell"/>
</dbReference>
<dbReference type="GO" id="GO:0005634">
    <property type="term" value="C:nucleus"/>
    <property type="evidence" value="ECO:0000318"/>
    <property type="project" value="GO_Central"/>
</dbReference>
<dbReference type="GO" id="GO:0003723">
    <property type="term" value="F:RNA binding"/>
    <property type="evidence" value="ECO:0007669"/>
    <property type="project" value="UniProtKB-KW"/>
</dbReference>
<dbReference type="GO" id="GO:0042254">
    <property type="term" value="P:ribosome biogenesis"/>
    <property type="evidence" value="ECO:0007669"/>
    <property type="project" value="UniProtKB-KW"/>
</dbReference>
<dbReference type="CDD" id="cd22391">
    <property type="entry name" value="KH-I_PNO1_rpt1"/>
    <property type="match status" value="1"/>
</dbReference>
<dbReference type="CDD" id="cd22392">
    <property type="entry name" value="KH-I_PNO1_rpt2"/>
    <property type="match status" value="1"/>
</dbReference>
<dbReference type="FunFam" id="3.30.1370.10:FF:000009">
    <property type="entry name" value="RNA-binding protein PNO1"/>
    <property type="match status" value="1"/>
</dbReference>
<dbReference type="Gene3D" id="3.30.1370.10">
    <property type="entry name" value="K Homology domain, type 1"/>
    <property type="match status" value="1"/>
</dbReference>
<dbReference type="InterPro" id="IPR055212">
    <property type="entry name" value="KH-I_PNO1_first"/>
</dbReference>
<dbReference type="InterPro" id="IPR004087">
    <property type="entry name" value="KH_dom"/>
</dbReference>
<dbReference type="InterPro" id="IPR036612">
    <property type="entry name" value="KH_dom_type_1_sf"/>
</dbReference>
<dbReference type="InterPro" id="IPR055211">
    <property type="entry name" value="KH_PNO1_2nd"/>
</dbReference>
<dbReference type="InterPro" id="IPR041174">
    <property type="entry name" value="KRR1-like_KH1"/>
</dbReference>
<dbReference type="PANTHER" id="PTHR12826">
    <property type="entry name" value="RIBONUCLEASE Y"/>
    <property type="match status" value="1"/>
</dbReference>
<dbReference type="PANTHER" id="PTHR12826:SF13">
    <property type="entry name" value="RNA-BINDING PROTEIN PNO1"/>
    <property type="match status" value="1"/>
</dbReference>
<dbReference type="Pfam" id="PF17903">
    <property type="entry name" value="KH_KRR1_1st"/>
    <property type="match status" value="1"/>
</dbReference>
<dbReference type="Pfam" id="PF22891">
    <property type="entry name" value="KH_PNO1_2nd"/>
    <property type="match status" value="1"/>
</dbReference>
<dbReference type="SMART" id="SM00322">
    <property type="entry name" value="KH"/>
    <property type="match status" value="1"/>
</dbReference>
<dbReference type="SUPFAM" id="SSF54791">
    <property type="entry name" value="Eukaryotic type KH-domain (KH-domain type I)"/>
    <property type="match status" value="1"/>
</dbReference>
<protein>
    <recommendedName>
        <fullName>Pre-rRNA-processing protein PNO1</fullName>
    </recommendedName>
</protein>
<keyword id="KW-0963">Cytoplasm</keyword>
<keyword id="KW-0539">Nucleus</keyword>
<keyword id="KW-1185">Reference proteome</keyword>
<keyword id="KW-0690">Ribosome biogenesis</keyword>
<keyword id="KW-0694">RNA-binding</keyword>
<proteinExistence type="inferred from homology"/>
<feature type="chain" id="PRO_0000278361" description="Pre-rRNA-processing protein PNO1">
    <location>
        <begin position="1"/>
        <end position="258"/>
    </location>
</feature>
<feature type="domain" description="KH">
    <location>
        <begin position="179"/>
        <end position="231"/>
    </location>
</feature>
<feature type="region of interest" description="Disordered" evidence="3">
    <location>
        <begin position="1"/>
        <end position="31"/>
    </location>
</feature>
<feature type="compositionally biased region" description="Polar residues" evidence="3">
    <location>
        <begin position="7"/>
        <end position="16"/>
    </location>
</feature>
<organism>
    <name type="scientific">Yarrowia lipolytica (strain CLIB 122 / E 150)</name>
    <name type="common">Yeast</name>
    <name type="synonym">Candida lipolytica</name>
    <dbReference type="NCBI Taxonomy" id="284591"/>
    <lineage>
        <taxon>Eukaryota</taxon>
        <taxon>Fungi</taxon>
        <taxon>Dikarya</taxon>
        <taxon>Ascomycota</taxon>
        <taxon>Saccharomycotina</taxon>
        <taxon>Dipodascomycetes</taxon>
        <taxon>Dipodascales</taxon>
        <taxon>Dipodascales incertae sedis</taxon>
        <taxon>Yarrowia</taxon>
    </lineage>
</organism>
<evidence type="ECO:0000250" key="1"/>
<evidence type="ECO:0000250" key="2">
    <source>
        <dbReference type="UniProtKB" id="Q99216"/>
    </source>
</evidence>
<evidence type="ECO:0000256" key="3">
    <source>
        <dbReference type="SAM" id="MobiDB-lite"/>
    </source>
</evidence>
<evidence type="ECO:0000305" key="4"/>
<reference key="1">
    <citation type="journal article" date="2004" name="Nature">
        <title>Genome evolution in yeasts.</title>
        <authorList>
            <person name="Dujon B."/>
            <person name="Sherman D."/>
            <person name="Fischer G."/>
            <person name="Durrens P."/>
            <person name="Casaregola S."/>
            <person name="Lafontaine I."/>
            <person name="de Montigny J."/>
            <person name="Marck C."/>
            <person name="Neuveglise C."/>
            <person name="Talla E."/>
            <person name="Goffard N."/>
            <person name="Frangeul L."/>
            <person name="Aigle M."/>
            <person name="Anthouard V."/>
            <person name="Babour A."/>
            <person name="Barbe V."/>
            <person name="Barnay S."/>
            <person name="Blanchin S."/>
            <person name="Beckerich J.-M."/>
            <person name="Beyne E."/>
            <person name="Bleykasten C."/>
            <person name="Boisrame A."/>
            <person name="Boyer J."/>
            <person name="Cattolico L."/>
            <person name="Confanioleri F."/>
            <person name="de Daruvar A."/>
            <person name="Despons L."/>
            <person name="Fabre E."/>
            <person name="Fairhead C."/>
            <person name="Ferry-Dumazet H."/>
            <person name="Groppi A."/>
            <person name="Hantraye F."/>
            <person name="Hennequin C."/>
            <person name="Jauniaux N."/>
            <person name="Joyet P."/>
            <person name="Kachouri R."/>
            <person name="Kerrest A."/>
            <person name="Koszul R."/>
            <person name="Lemaire M."/>
            <person name="Lesur I."/>
            <person name="Ma L."/>
            <person name="Muller H."/>
            <person name="Nicaud J.-M."/>
            <person name="Nikolski M."/>
            <person name="Oztas S."/>
            <person name="Ozier-Kalogeropoulos O."/>
            <person name="Pellenz S."/>
            <person name="Potier S."/>
            <person name="Richard G.-F."/>
            <person name="Straub M.-L."/>
            <person name="Suleau A."/>
            <person name="Swennen D."/>
            <person name="Tekaia F."/>
            <person name="Wesolowski-Louvel M."/>
            <person name="Westhof E."/>
            <person name="Wirth B."/>
            <person name="Zeniou-Meyer M."/>
            <person name="Zivanovic Y."/>
            <person name="Bolotin-Fukuhara M."/>
            <person name="Thierry A."/>
            <person name="Bouchier C."/>
            <person name="Caudron B."/>
            <person name="Scarpelli C."/>
            <person name="Gaillardin C."/>
            <person name="Weissenbach J."/>
            <person name="Wincker P."/>
            <person name="Souciet J.-L."/>
        </authorList>
    </citation>
    <scope>NUCLEOTIDE SEQUENCE [LARGE SCALE GENOMIC DNA]</scope>
    <source>
        <strain>CLIB 122 / E 150</strain>
    </source>
</reference>
<comment type="function">
    <text evidence="1">Required for small ribosomal subunit (SSU) synthesis. Has a role in the processing of early nucleolar and late cytoplasmic pre-RNA species (By similarity).</text>
</comment>
<comment type="subunit">
    <text evidence="1">Component of the small ribosomal subunit, ribosomal RNA processing complex (SSU RRP complex).</text>
</comment>
<comment type="subcellular location">
    <subcellularLocation>
        <location evidence="2">Cytoplasm</location>
    </subcellularLocation>
    <subcellularLocation>
        <location evidence="2">Nucleus</location>
        <location evidence="2">Nucleolus</location>
    </subcellularLocation>
</comment>
<comment type="similarity">
    <text evidence="4">Belongs to the PNO1 family.</text>
</comment>